<feature type="chain" id="PRO_0000368696" description="ATP synthase subunit b">
    <location>
        <begin position="1"/>
        <end position="156"/>
    </location>
</feature>
<feature type="transmembrane region" description="Helical" evidence="1">
    <location>
        <begin position="12"/>
        <end position="32"/>
    </location>
</feature>
<keyword id="KW-0066">ATP synthesis</keyword>
<keyword id="KW-0997">Cell inner membrane</keyword>
<keyword id="KW-1003">Cell membrane</keyword>
<keyword id="KW-0138">CF(0)</keyword>
<keyword id="KW-0375">Hydrogen ion transport</keyword>
<keyword id="KW-0406">Ion transport</keyword>
<keyword id="KW-0472">Membrane</keyword>
<keyword id="KW-1185">Reference proteome</keyword>
<keyword id="KW-0812">Transmembrane</keyword>
<keyword id="KW-1133">Transmembrane helix</keyword>
<keyword id="KW-0813">Transport</keyword>
<name>ATPF_PSESM</name>
<sequence>MNINATLIGQSVAFFIFVLFCMKYVWPPVIAALHERQKKIADGLDAASRAARDLELAQDKVGQQLREAKAQAAEIIEQAKKRGTQIVDEARETARVEADRVKAQAQAEIEQELNGVKDALRAQLGSLAVNGAEKILGATIDQNAHAELVNKLAAEI</sequence>
<reference key="1">
    <citation type="journal article" date="2003" name="Proc. Natl. Acad. Sci. U.S.A.">
        <title>The complete genome sequence of the Arabidopsis and tomato pathogen Pseudomonas syringae pv. tomato DC3000.</title>
        <authorList>
            <person name="Buell C.R."/>
            <person name="Joardar V."/>
            <person name="Lindeberg M."/>
            <person name="Selengut J."/>
            <person name="Paulsen I.T."/>
            <person name="Gwinn M.L."/>
            <person name="Dodson R.J."/>
            <person name="DeBoy R.T."/>
            <person name="Durkin A.S."/>
            <person name="Kolonay J.F."/>
            <person name="Madupu R."/>
            <person name="Daugherty S.C."/>
            <person name="Brinkac L.M."/>
            <person name="Beanan M.J."/>
            <person name="Haft D.H."/>
            <person name="Nelson W.C."/>
            <person name="Davidsen T.M."/>
            <person name="Zafar N."/>
            <person name="Zhou L."/>
            <person name="Liu J."/>
            <person name="Yuan Q."/>
            <person name="Khouri H.M."/>
            <person name="Fedorova N.B."/>
            <person name="Tran B."/>
            <person name="Russell D."/>
            <person name="Berry K.J."/>
            <person name="Utterback T.R."/>
            <person name="Van Aken S.E."/>
            <person name="Feldblyum T.V."/>
            <person name="D'Ascenzo M."/>
            <person name="Deng W.-L."/>
            <person name="Ramos A.R."/>
            <person name="Alfano J.R."/>
            <person name="Cartinhour S."/>
            <person name="Chatterjee A.K."/>
            <person name="Delaney T.P."/>
            <person name="Lazarowitz S.G."/>
            <person name="Martin G.B."/>
            <person name="Schneider D.J."/>
            <person name="Tang X."/>
            <person name="Bender C.L."/>
            <person name="White O."/>
            <person name="Fraser C.M."/>
            <person name="Collmer A."/>
        </authorList>
    </citation>
    <scope>NUCLEOTIDE SEQUENCE [LARGE SCALE GENOMIC DNA]</scope>
    <source>
        <strain>ATCC BAA-871 / DC3000</strain>
    </source>
</reference>
<proteinExistence type="inferred from homology"/>
<organism>
    <name type="scientific">Pseudomonas syringae pv. tomato (strain ATCC BAA-871 / DC3000)</name>
    <dbReference type="NCBI Taxonomy" id="223283"/>
    <lineage>
        <taxon>Bacteria</taxon>
        <taxon>Pseudomonadati</taxon>
        <taxon>Pseudomonadota</taxon>
        <taxon>Gammaproteobacteria</taxon>
        <taxon>Pseudomonadales</taxon>
        <taxon>Pseudomonadaceae</taxon>
        <taxon>Pseudomonas</taxon>
    </lineage>
</organism>
<evidence type="ECO:0000255" key="1">
    <source>
        <dbReference type="HAMAP-Rule" id="MF_01398"/>
    </source>
</evidence>
<comment type="function">
    <text evidence="1">F(1)F(0) ATP synthase produces ATP from ADP in the presence of a proton or sodium gradient. F-type ATPases consist of two structural domains, F(1) containing the extramembraneous catalytic core and F(0) containing the membrane proton channel, linked together by a central stalk and a peripheral stalk. During catalysis, ATP synthesis in the catalytic domain of F(1) is coupled via a rotary mechanism of the central stalk subunits to proton translocation.</text>
</comment>
<comment type="function">
    <text evidence="1">Component of the F(0) channel, it forms part of the peripheral stalk, linking F(1) to F(0).</text>
</comment>
<comment type="subunit">
    <text evidence="1">F-type ATPases have 2 components, F(1) - the catalytic core - and F(0) - the membrane proton channel. F(1) has five subunits: alpha(3), beta(3), gamma(1), delta(1), epsilon(1). F(0) has three main subunits: a(1), b(2) and c(10-14). The alpha and beta chains form an alternating ring which encloses part of the gamma chain. F(1) is attached to F(0) by a central stalk formed by the gamma and epsilon chains, while a peripheral stalk is formed by the delta and b chains.</text>
</comment>
<comment type="subcellular location">
    <subcellularLocation>
        <location evidence="1">Cell inner membrane</location>
        <topology evidence="1">Single-pass membrane protein</topology>
    </subcellularLocation>
</comment>
<comment type="similarity">
    <text evidence="1">Belongs to the ATPase B chain family.</text>
</comment>
<dbReference type="EMBL" id="AE016853">
    <property type="protein sequence ID" value="AAO59016.1"/>
    <property type="molecule type" value="Genomic_DNA"/>
</dbReference>
<dbReference type="RefSeq" id="NP_795321.1">
    <property type="nucleotide sequence ID" value="NC_004578.1"/>
</dbReference>
<dbReference type="RefSeq" id="WP_005613564.1">
    <property type="nucleotide sequence ID" value="NC_004578.1"/>
</dbReference>
<dbReference type="SMR" id="Q87TT0"/>
<dbReference type="STRING" id="223283.PSPTO_5603"/>
<dbReference type="KEGG" id="pst:PSPTO_5603"/>
<dbReference type="PATRIC" id="fig|223283.9.peg.5740"/>
<dbReference type="eggNOG" id="COG0711">
    <property type="taxonomic scope" value="Bacteria"/>
</dbReference>
<dbReference type="HOGENOM" id="CLU_079215_4_5_6"/>
<dbReference type="OrthoDB" id="9788020at2"/>
<dbReference type="PhylomeDB" id="Q87TT0"/>
<dbReference type="Proteomes" id="UP000002515">
    <property type="component" value="Chromosome"/>
</dbReference>
<dbReference type="GO" id="GO:0005886">
    <property type="term" value="C:plasma membrane"/>
    <property type="evidence" value="ECO:0007669"/>
    <property type="project" value="UniProtKB-SubCell"/>
</dbReference>
<dbReference type="GO" id="GO:0045259">
    <property type="term" value="C:proton-transporting ATP synthase complex"/>
    <property type="evidence" value="ECO:0007669"/>
    <property type="project" value="UniProtKB-KW"/>
</dbReference>
<dbReference type="GO" id="GO:0046933">
    <property type="term" value="F:proton-transporting ATP synthase activity, rotational mechanism"/>
    <property type="evidence" value="ECO:0007669"/>
    <property type="project" value="UniProtKB-UniRule"/>
</dbReference>
<dbReference type="GO" id="GO:0046961">
    <property type="term" value="F:proton-transporting ATPase activity, rotational mechanism"/>
    <property type="evidence" value="ECO:0007669"/>
    <property type="project" value="TreeGrafter"/>
</dbReference>
<dbReference type="CDD" id="cd06503">
    <property type="entry name" value="ATP-synt_Fo_b"/>
    <property type="match status" value="1"/>
</dbReference>
<dbReference type="FunFam" id="1.20.5.620:FF:000001">
    <property type="entry name" value="ATP synthase subunit b"/>
    <property type="match status" value="1"/>
</dbReference>
<dbReference type="Gene3D" id="1.20.5.620">
    <property type="entry name" value="F1F0 ATP synthase subunit B, membrane domain"/>
    <property type="match status" value="1"/>
</dbReference>
<dbReference type="HAMAP" id="MF_01398">
    <property type="entry name" value="ATP_synth_b_bprime"/>
    <property type="match status" value="1"/>
</dbReference>
<dbReference type="InterPro" id="IPR028987">
    <property type="entry name" value="ATP_synth_B-like_membr_sf"/>
</dbReference>
<dbReference type="InterPro" id="IPR002146">
    <property type="entry name" value="ATP_synth_b/b'su_bac/chlpt"/>
</dbReference>
<dbReference type="InterPro" id="IPR005864">
    <property type="entry name" value="ATP_synth_F0_bsu_bac"/>
</dbReference>
<dbReference type="InterPro" id="IPR050059">
    <property type="entry name" value="ATP_synthase_B_chain"/>
</dbReference>
<dbReference type="NCBIfam" id="TIGR01144">
    <property type="entry name" value="ATP_synt_b"/>
    <property type="match status" value="1"/>
</dbReference>
<dbReference type="NCBIfam" id="NF004411">
    <property type="entry name" value="PRK05759.1-2"/>
    <property type="match status" value="1"/>
</dbReference>
<dbReference type="NCBIfam" id="NF004413">
    <property type="entry name" value="PRK05759.1-4"/>
    <property type="match status" value="1"/>
</dbReference>
<dbReference type="PANTHER" id="PTHR33445:SF1">
    <property type="entry name" value="ATP SYNTHASE SUBUNIT B"/>
    <property type="match status" value="1"/>
</dbReference>
<dbReference type="PANTHER" id="PTHR33445">
    <property type="entry name" value="ATP SYNTHASE SUBUNIT B', CHLOROPLASTIC"/>
    <property type="match status" value="1"/>
</dbReference>
<dbReference type="Pfam" id="PF00430">
    <property type="entry name" value="ATP-synt_B"/>
    <property type="match status" value="1"/>
</dbReference>
<dbReference type="SUPFAM" id="SSF81573">
    <property type="entry name" value="F1F0 ATP synthase subunit B, membrane domain"/>
    <property type="match status" value="1"/>
</dbReference>
<accession>Q87TT0</accession>
<protein>
    <recommendedName>
        <fullName evidence="1">ATP synthase subunit b</fullName>
    </recommendedName>
    <alternativeName>
        <fullName evidence="1">ATP synthase F(0) sector subunit b</fullName>
    </alternativeName>
    <alternativeName>
        <fullName evidence="1">ATPase subunit I</fullName>
    </alternativeName>
    <alternativeName>
        <fullName evidence="1">F-type ATPase subunit b</fullName>
        <shortName evidence="1">F-ATPase subunit b</shortName>
    </alternativeName>
</protein>
<gene>
    <name evidence="1" type="primary">atpF</name>
    <name type="ordered locus">PSPTO_5603</name>
</gene>